<sequence length="178" mass="20821">MKVNPPLAWHPAPVSAPVDLHWWLTHRGSLTRLIQDRCEHFRVEPIFQALATACIDELEVMNLRRQTRALVREVYLRCNETPVVFAHSIVRKEHLRGAWRGLSRLGNQSLGTMLFTNPLIQRTPLAFKKLKPHHPLFERACKRLQNRPADLWARRSLFILQHQPILVTEVFLPAIRRL</sequence>
<evidence type="ECO:0000255" key="1">
    <source>
        <dbReference type="HAMAP-Rule" id="MF_01632"/>
    </source>
</evidence>
<name>UBIC_NITEU</name>
<organism>
    <name type="scientific">Nitrosomonas europaea (strain ATCC 19718 / CIP 103999 / KCTC 2705 / NBRC 14298)</name>
    <dbReference type="NCBI Taxonomy" id="228410"/>
    <lineage>
        <taxon>Bacteria</taxon>
        <taxon>Pseudomonadati</taxon>
        <taxon>Pseudomonadota</taxon>
        <taxon>Betaproteobacteria</taxon>
        <taxon>Nitrosomonadales</taxon>
        <taxon>Nitrosomonadaceae</taxon>
        <taxon>Nitrosomonas</taxon>
    </lineage>
</organism>
<comment type="function">
    <text evidence="1">Removes the pyruvyl group from chorismate, with concomitant aromatization of the ring, to provide 4-hydroxybenzoate (4HB) for the ubiquinone pathway.</text>
</comment>
<comment type="catalytic activity">
    <reaction evidence="1">
        <text>chorismate = 4-hydroxybenzoate + pyruvate</text>
        <dbReference type="Rhea" id="RHEA:16505"/>
        <dbReference type="ChEBI" id="CHEBI:15361"/>
        <dbReference type="ChEBI" id="CHEBI:17879"/>
        <dbReference type="ChEBI" id="CHEBI:29748"/>
        <dbReference type="EC" id="4.1.3.40"/>
    </reaction>
</comment>
<comment type="pathway">
    <text evidence="1">Cofactor biosynthesis; ubiquinone biosynthesis.</text>
</comment>
<comment type="subcellular location">
    <subcellularLocation>
        <location evidence="1">Cytoplasm</location>
    </subcellularLocation>
</comment>
<comment type="similarity">
    <text evidence="1">Belongs to the UbiC family.</text>
</comment>
<keyword id="KW-0963">Cytoplasm</keyword>
<keyword id="KW-0456">Lyase</keyword>
<keyword id="KW-0670">Pyruvate</keyword>
<keyword id="KW-1185">Reference proteome</keyword>
<keyword id="KW-0831">Ubiquinone biosynthesis</keyword>
<accession>Q82TP3</accession>
<reference key="1">
    <citation type="journal article" date="2003" name="J. Bacteriol.">
        <title>Complete genome sequence of the ammonia-oxidizing bacterium and obligate chemolithoautotroph Nitrosomonas europaea.</title>
        <authorList>
            <person name="Chain P."/>
            <person name="Lamerdin J.E."/>
            <person name="Larimer F.W."/>
            <person name="Regala W."/>
            <person name="Lao V."/>
            <person name="Land M.L."/>
            <person name="Hauser L."/>
            <person name="Hooper A.B."/>
            <person name="Klotz M.G."/>
            <person name="Norton J."/>
            <person name="Sayavedra-Soto L.A."/>
            <person name="Arciero D.M."/>
            <person name="Hommes N.G."/>
            <person name="Whittaker M.M."/>
            <person name="Arp D.J."/>
        </authorList>
    </citation>
    <scope>NUCLEOTIDE SEQUENCE [LARGE SCALE GENOMIC DNA]</scope>
    <source>
        <strain>ATCC 19718 / CIP 103999 / KCTC 2705 / NBRC 14298</strain>
    </source>
</reference>
<protein>
    <recommendedName>
        <fullName evidence="1">Probable chorismate pyruvate-lyase</fullName>
        <shortName evidence="1">CL</shortName>
        <shortName evidence="1">CPL</shortName>
        <ecNumber evidence="1">4.1.3.40</ecNumber>
    </recommendedName>
</protein>
<feature type="chain" id="PRO_0000240550" description="Probable chorismate pyruvate-lyase">
    <location>
        <begin position="1"/>
        <end position="178"/>
    </location>
</feature>
<feature type="binding site" evidence="1">
    <location>
        <position position="72"/>
    </location>
    <ligand>
        <name>substrate</name>
    </ligand>
</feature>
<feature type="binding site" evidence="1">
    <location>
        <position position="110"/>
    </location>
    <ligand>
        <name>substrate</name>
    </ligand>
</feature>
<feature type="binding site" evidence="1">
    <location>
        <position position="169"/>
    </location>
    <ligand>
        <name>substrate</name>
    </ligand>
</feature>
<dbReference type="EC" id="4.1.3.40" evidence="1"/>
<dbReference type="EMBL" id="AL954747">
    <property type="protein sequence ID" value="CAD85748.1"/>
    <property type="molecule type" value="Genomic_DNA"/>
</dbReference>
<dbReference type="RefSeq" id="WP_011112379.1">
    <property type="nucleotide sequence ID" value="NC_004757.1"/>
</dbReference>
<dbReference type="SMR" id="Q82TP3"/>
<dbReference type="STRING" id="228410.NE1837"/>
<dbReference type="GeneID" id="87104996"/>
<dbReference type="KEGG" id="neu:NE1837"/>
<dbReference type="eggNOG" id="COG3161">
    <property type="taxonomic scope" value="Bacteria"/>
</dbReference>
<dbReference type="HOGENOM" id="CLU_096824_2_0_4"/>
<dbReference type="OrthoDB" id="8606430at2"/>
<dbReference type="PhylomeDB" id="Q82TP3"/>
<dbReference type="UniPathway" id="UPA00232"/>
<dbReference type="Proteomes" id="UP000001416">
    <property type="component" value="Chromosome"/>
</dbReference>
<dbReference type="GO" id="GO:0005829">
    <property type="term" value="C:cytosol"/>
    <property type="evidence" value="ECO:0007669"/>
    <property type="project" value="TreeGrafter"/>
</dbReference>
<dbReference type="GO" id="GO:0008813">
    <property type="term" value="F:chorismate lyase activity"/>
    <property type="evidence" value="ECO:0007669"/>
    <property type="project" value="UniProtKB-UniRule"/>
</dbReference>
<dbReference type="GO" id="GO:0042866">
    <property type="term" value="P:pyruvate biosynthetic process"/>
    <property type="evidence" value="ECO:0007669"/>
    <property type="project" value="UniProtKB-UniRule"/>
</dbReference>
<dbReference type="GO" id="GO:0006744">
    <property type="term" value="P:ubiquinone biosynthetic process"/>
    <property type="evidence" value="ECO:0007669"/>
    <property type="project" value="UniProtKB-UniRule"/>
</dbReference>
<dbReference type="Gene3D" id="3.40.1410.10">
    <property type="entry name" value="Chorismate lyase-like"/>
    <property type="match status" value="1"/>
</dbReference>
<dbReference type="HAMAP" id="MF_01632">
    <property type="entry name" value="UbiC"/>
    <property type="match status" value="1"/>
</dbReference>
<dbReference type="InterPro" id="IPR007440">
    <property type="entry name" value="Chorismate--pyruvate_lyase"/>
</dbReference>
<dbReference type="InterPro" id="IPR028978">
    <property type="entry name" value="Chorismate_lyase_/UTRA_dom_sf"/>
</dbReference>
<dbReference type="PANTHER" id="PTHR38683">
    <property type="entry name" value="CHORISMATE PYRUVATE-LYASE"/>
    <property type="match status" value="1"/>
</dbReference>
<dbReference type="PANTHER" id="PTHR38683:SF1">
    <property type="entry name" value="CHORISMATE PYRUVATE-LYASE"/>
    <property type="match status" value="1"/>
</dbReference>
<dbReference type="Pfam" id="PF04345">
    <property type="entry name" value="Chor_lyase"/>
    <property type="match status" value="1"/>
</dbReference>
<dbReference type="SUPFAM" id="SSF64288">
    <property type="entry name" value="Chorismate lyase-like"/>
    <property type="match status" value="1"/>
</dbReference>
<proteinExistence type="inferred from homology"/>
<gene>
    <name evidence="1" type="primary">ubiC</name>
    <name type="ordered locus">NE1837</name>
</gene>